<proteinExistence type="predicted"/>
<organism>
    <name type="scientific">Vaccinia virus (strain Copenhagen)</name>
    <name type="common">VACV</name>
    <dbReference type="NCBI Taxonomy" id="10249"/>
    <lineage>
        <taxon>Viruses</taxon>
        <taxon>Varidnaviria</taxon>
        <taxon>Bamfordvirae</taxon>
        <taxon>Nucleocytoviricota</taxon>
        <taxon>Pokkesviricetes</taxon>
        <taxon>Chitovirales</taxon>
        <taxon>Poxviridae</taxon>
        <taxon>Chordopoxvirinae</taxon>
        <taxon>Orthopoxvirus</taxon>
        <taxon>Vaccinia virus</taxon>
    </lineage>
</organism>
<accession>P20512</accession>
<sequence length="128" mass="14441">MALMAITKNVKYFSMLGIWFFTLIDIWFLAKMIDIFLSEDSKILLVAVSIKMKLVSISNFILELIGVAKCTLYVISPLMRSICVSISDTRSVNSFTLLIITVSPSLDNANVPSKSQMERFNCSSFRIK</sequence>
<name>YVAC_VACCC</name>
<feature type="chain" id="PRO_0000099644" description="Uncharacterized 14.4 kDa protein">
    <location>
        <begin position="1"/>
        <end position="128"/>
    </location>
</feature>
<keyword id="KW-1185">Reference proteome</keyword>
<reference key="1">
    <citation type="journal article" date="1990" name="Virology">
        <title>The complete DNA sequence of vaccinia virus.</title>
        <authorList>
            <person name="Goebel S.J."/>
            <person name="Johnson G.P."/>
            <person name="Perkus M.E."/>
            <person name="Davis S.W."/>
            <person name="Winslow J.P."/>
            <person name="Paoletti E."/>
        </authorList>
    </citation>
    <scope>NUCLEOTIDE SEQUENCE [LARGE SCALE GENOMIC DNA]</scope>
</reference>
<reference key="2">
    <citation type="journal article" date="1990" name="Virology">
        <title>Appendix to 'The complete DNA sequence of vaccinia virus'.</title>
        <authorList>
            <person name="Goebel S.J."/>
            <person name="Johnson G.P."/>
            <person name="Perkus M.E."/>
            <person name="Davis S.W."/>
            <person name="Winslow J.P."/>
            <person name="Paoletti E."/>
        </authorList>
    </citation>
    <scope>COMPLETE GENOME</scope>
</reference>
<dbReference type="EMBL" id="M35027">
    <property type="protein sequence ID" value="AAA48125.1"/>
    <property type="molecule type" value="Genomic_DNA"/>
</dbReference>
<dbReference type="PIR" id="H42523">
    <property type="entry name" value="H42523"/>
</dbReference>
<dbReference type="Proteomes" id="UP000008269">
    <property type="component" value="Segment"/>
</dbReference>
<protein>
    <recommendedName>
        <fullName>Uncharacterized 14.4 kDa protein</fullName>
    </recommendedName>
</protein>
<gene>
    <name type="ORF">A ORF C</name>
</gene>
<organismHost>
    <name type="scientific">Homo sapiens</name>
    <name type="common">Human</name>
    <dbReference type="NCBI Taxonomy" id="9606"/>
</organismHost>